<name>MITF_MOUSE</name>
<feature type="chain" id="PRO_0000127277" description="Microphthalmia-associated transcription factor">
    <location>
        <begin position="1"/>
        <end position="526"/>
    </location>
</feature>
<feature type="domain" description="bHLH" evidence="4">
    <location>
        <begin position="311"/>
        <end position="364"/>
    </location>
</feature>
<feature type="region of interest" description="Disordered" evidence="5">
    <location>
        <begin position="20"/>
        <end position="54"/>
    </location>
</feature>
<feature type="region of interest" description="Disordered" evidence="5">
    <location>
        <begin position="155"/>
        <end position="179"/>
    </location>
</feature>
<feature type="region of interest" description="Transactivation" evidence="1">
    <location>
        <begin position="224"/>
        <end position="291"/>
    </location>
</feature>
<feature type="region of interest" description="Leucine-zipper" evidence="15">
    <location>
        <begin position="374"/>
        <end position="395"/>
    </location>
</feature>
<feature type="region of interest" description="DNA-binding regulation" evidence="1">
    <location>
        <begin position="401"/>
        <end position="431"/>
    </location>
</feature>
<feature type="region of interest" description="Disordered" evidence="5">
    <location>
        <begin position="496"/>
        <end position="526"/>
    </location>
</feature>
<feature type="coiled-coil region" evidence="3">
    <location>
        <begin position="355"/>
        <end position="401"/>
    </location>
</feature>
<feature type="compositionally biased region" description="Low complexity" evidence="5">
    <location>
        <begin position="34"/>
        <end position="44"/>
    </location>
</feature>
<feature type="compositionally biased region" description="Low complexity" evidence="5">
    <location>
        <begin position="507"/>
        <end position="519"/>
    </location>
</feature>
<feature type="modified residue" description="Phosphoserine; by MTOR" evidence="2">
    <location>
        <position position="5"/>
    </location>
</feature>
<feature type="modified residue" description="Phosphoserine; by MAPK" evidence="2">
    <location>
        <position position="180"/>
    </location>
</feature>
<feature type="modified residue" description="Phosphoserine" evidence="2">
    <location>
        <position position="280"/>
    </location>
</feature>
<feature type="modified residue" description="Phosphoserine; by GSK3" evidence="2">
    <location>
        <position position="405"/>
    </location>
</feature>
<feature type="modified residue" description="Phosphoserine" evidence="20">
    <location>
        <position position="414"/>
    </location>
</feature>
<feature type="modified residue" description="Phosphoserine" evidence="2">
    <location>
        <position position="491"/>
    </location>
</feature>
<feature type="modified residue" description="Phosphoserine; by RPS6KA1" evidence="2">
    <location>
        <position position="516"/>
    </location>
</feature>
<feature type="cross-link" description="Glycyl lysine isopeptide (Lys-Gly) (interchain with G-Cter in SUMO)" evidence="2">
    <location>
        <position position="289"/>
    </location>
</feature>
<feature type="cross-link" description="Glycyl lysine isopeptide (Lys-Gly) (interchain with G-Cter in SUMO)" evidence="2">
    <location>
        <position position="423"/>
    </location>
</feature>
<feature type="splice variant" id="VSP_002130" description="In isoform M and isoform M1." evidence="13">
    <original>MQSESGIVADFEVGEEFHEEPKTYYELKSQPLKSSSSAEHSGASKPPLSSSTMTSRILLRQQLMREQMQEQERREQQQKLQAAQFMQQRVAVSQTPAINVSVPTTLPSATQVPMEVLK</original>
    <variation>MLEMLEYSHYQ</variation>
    <location>
        <begin position="1"/>
        <end position="118"/>
    </location>
</feature>
<feature type="splice variant" id="VSP_002129" description="In isoform H, isoform H1, isoform H2 and isoform H3." evidence="14">
    <original>MQSESGIVADFEVGEEFHEEPKTYYELKSQPLKSS</original>
    <variation>MEALRFEMLIPCSFESLCL</variation>
    <location>
        <begin position="1"/>
        <end position="35"/>
    </location>
</feature>
<feature type="splice variant" id="VSP_002132" description="In isoform H1 and isoform H2." evidence="14">
    <location>
        <begin position="119"/>
        <end position="254"/>
    </location>
</feature>
<feature type="splice variant" id="VSP_002131" description="In isoform A2." evidence="14">
    <location>
        <begin position="119"/>
        <end position="222"/>
    </location>
</feature>
<feature type="splice variant" id="VSP_002133" description="In isoform A1 and isoform H3." evidence="14">
    <location>
        <begin position="139"/>
        <end position="194"/>
    </location>
</feature>
<feature type="splice variant" id="VSP_002135" description="In isoform H2." evidence="14">
    <original>ACIFPTESEARALAKERQKKDNHNLI</original>
    <variation>V</variation>
    <location>
        <begin position="294"/>
        <end position="319"/>
    </location>
</feature>
<feature type="splice variant" id="VSP_002134" description="In isoform A2 and isoform M1." evidence="13">
    <location>
        <begin position="294"/>
        <end position="299"/>
    </location>
</feature>
<feature type="splice variant" id="VSP_002136" description="In isoform A2." evidence="14">
    <original>LI</original>
    <variation>LSKFV</variation>
    <location>
        <begin position="318"/>
        <end position="319"/>
    </location>
</feature>
<feature type="sequence variant" description="In microphthalmia-red-eyed white/mi-rw.">
    <location>
        <begin position="36"/>
        <end position="118"/>
    </location>
</feature>
<feature type="sequence variant" description="In microphthalmia-white spot/mi-ws." evidence="11">
    <location>
        <begin position="119"/>
        <end position="254"/>
    </location>
</feature>
<feature type="sequence variant" description="In microphthalmia-black and white spot/mi-bws.">
    <location>
        <begin position="139"/>
        <end position="194"/>
    </location>
</feature>
<feature type="sequence variant" description="In microphthalmia-eyeless-white/mi-ew.">
    <original>ACIFPTESEARALAKERQKKDNHNLI</original>
    <variation>V</variation>
    <location>
        <begin position="294"/>
        <end position="319"/>
    </location>
</feature>
<feature type="sequence variant" description="In microphthalmia-spotted/mi-sp.">
    <location>
        <begin position="294"/>
        <end position="299"/>
    </location>
</feature>
<feature type="sequence variant" description="In microphthalmia-white/mi-wh.">
    <original>I</original>
    <variation>N</variation>
    <location>
        <position position="319"/>
    </location>
</feature>
<feature type="sequence variant" description="In microphthalmia/mi." evidence="11">
    <location>
        <position position="323"/>
    </location>
</feature>
<feature type="sequence variant" description="In microphthalmia-vitiligo/mi-vi.">
    <original>D</original>
    <variation>N</variation>
    <location>
        <position position="329"/>
    </location>
</feature>
<feature type="sequence variant" description="In microphthalmia-cloudy-eyed/mi-ce and microphthalmia-defective iris/mi-di.">
    <location>
        <begin position="370"/>
        <end position="526"/>
    </location>
</feature>
<feature type="mutagenesis site" description="Changes the structure of the leucine zipper and thereby confers the ability to form heterodimers with MAX." evidence="9">
    <original>EQQ</original>
    <variation>AAA</variation>
    <location>
        <begin position="367"/>
        <end position="369"/>
    </location>
</feature>
<feature type="sequence conflict" description="In Ref. 2; AAF81266/AAF81267/AAF81268/AAF81269/AAF81270/AAF81271/AAF81272." ref="2">
    <original>A</original>
    <variation>P</variation>
    <location>
        <position position="9"/>
    </location>
</feature>
<feature type="helix" evidence="22">
    <location>
        <begin position="311"/>
        <end position="315"/>
    </location>
</feature>
<feature type="helix" evidence="21">
    <location>
        <begin position="324"/>
        <end position="337"/>
    </location>
</feature>
<feature type="strand" evidence="23">
    <location>
        <begin position="338"/>
        <end position="340"/>
    </location>
</feature>
<feature type="helix" evidence="21">
    <location>
        <begin position="350"/>
        <end position="366"/>
    </location>
</feature>
<feature type="helix" evidence="21">
    <location>
        <begin position="368"/>
        <end position="401"/>
    </location>
</feature>
<dbReference type="EMBL" id="Z23066">
    <property type="protein sequence ID" value="CAA80600.1"/>
    <property type="molecule type" value="mRNA"/>
</dbReference>
<dbReference type="EMBL" id="AF222344">
    <property type="protein sequence ID" value="AAF63466.1"/>
    <property type="molecule type" value="Genomic_DNA"/>
</dbReference>
<dbReference type="EMBL" id="AF222959">
    <property type="protein sequence ID" value="AAF81266.2"/>
    <property type="molecule type" value="Genomic_DNA"/>
</dbReference>
<dbReference type="EMBL" id="AF222949">
    <property type="protein sequence ID" value="AAF81266.2"/>
    <property type="status" value="JOINED"/>
    <property type="molecule type" value="Genomic_DNA"/>
</dbReference>
<dbReference type="EMBL" id="AF222951">
    <property type="protein sequence ID" value="AAF81266.2"/>
    <property type="status" value="JOINED"/>
    <property type="molecule type" value="Genomic_DNA"/>
</dbReference>
<dbReference type="EMBL" id="AF222953">
    <property type="protein sequence ID" value="AAF81266.2"/>
    <property type="status" value="JOINED"/>
    <property type="molecule type" value="Genomic_DNA"/>
</dbReference>
<dbReference type="EMBL" id="AF222954">
    <property type="protein sequence ID" value="AAF81266.2"/>
    <property type="status" value="JOINED"/>
    <property type="molecule type" value="Genomic_DNA"/>
</dbReference>
<dbReference type="EMBL" id="AF222955">
    <property type="protein sequence ID" value="AAF81266.2"/>
    <property type="status" value="JOINED"/>
    <property type="molecule type" value="Genomic_DNA"/>
</dbReference>
<dbReference type="EMBL" id="AF222956">
    <property type="protein sequence ID" value="AAF81266.2"/>
    <property type="status" value="JOINED"/>
    <property type="molecule type" value="Genomic_DNA"/>
</dbReference>
<dbReference type="EMBL" id="AF222957">
    <property type="protein sequence ID" value="AAF81266.2"/>
    <property type="status" value="JOINED"/>
    <property type="molecule type" value="Genomic_DNA"/>
</dbReference>
<dbReference type="EMBL" id="AF222958">
    <property type="protein sequence ID" value="AAF81266.2"/>
    <property type="status" value="JOINED"/>
    <property type="molecule type" value="Genomic_DNA"/>
</dbReference>
<dbReference type="EMBL" id="AF222959">
    <property type="protein sequence ID" value="AAF81267.2"/>
    <property type="molecule type" value="Genomic_DNA"/>
</dbReference>
<dbReference type="EMBL" id="AF222950">
    <property type="protein sequence ID" value="AAF81267.2"/>
    <property type="status" value="JOINED"/>
    <property type="molecule type" value="Genomic_DNA"/>
</dbReference>
<dbReference type="EMBL" id="AF222951">
    <property type="protein sequence ID" value="AAF81267.2"/>
    <property type="status" value="JOINED"/>
    <property type="molecule type" value="Genomic_DNA"/>
</dbReference>
<dbReference type="EMBL" id="AF222953">
    <property type="protein sequence ID" value="AAF81267.2"/>
    <property type="status" value="JOINED"/>
    <property type="molecule type" value="Genomic_DNA"/>
</dbReference>
<dbReference type="EMBL" id="AF222954">
    <property type="protein sequence ID" value="AAF81267.2"/>
    <property type="status" value="JOINED"/>
    <property type="molecule type" value="Genomic_DNA"/>
</dbReference>
<dbReference type="EMBL" id="AF222955">
    <property type="protein sequence ID" value="AAF81267.2"/>
    <property type="status" value="JOINED"/>
    <property type="molecule type" value="Genomic_DNA"/>
</dbReference>
<dbReference type="EMBL" id="AF222956">
    <property type="protein sequence ID" value="AAF81267.2"/>
    <property type="status" value="JOINED"/>
    <property type="molecule type" value="Genomic_DNA"/>
</dbReference>
<dbReference type="EMBL" id="AF222957">
    <property type="protein sequence ID" value="AAF81267.2"/>
    <property type="status" value="JOINED"/>
    <property type="molecule type" value="Genomic_DNA"/>
</dbReference>
<dbReference type="EMBL" id="AF222958">
    <property type="protein sequence ID" value="AAF81267.2"/>
    <property type="status" value="JOINED"/>
    <property type="molecule type" value="Genomic_DNA"/>
</dbReference>
<dbReference type="EMBL" id="AF222959">
    <property type="protein sequence ID" value="AAF81268.2"/>
    <property type="molecule type" value="Genomic_DNA"/>
</dbReference>
<dbReference type="EMBL" id="AF222950">
    <property type="protein sequence ID" value="AAF81268.2"/>
    <property type="status" value="JOINED"/>
    <property type="molecule type" value="Genomic_DNA"/>
</dbReference>
<dbReference type="EMBL" id="AF222951">
    <property type="protein sequence ID" value="AAF81268.2"/>
    <property type="status" value="JOINED"/>
    <property type="molecule type" value="Genomic_DNA"/>
</dbReference>
<dbReference type="EMBL" id="AF222956">
    <property type="protein sequence ID" value="AAF81268.2"/>
    <property type="status" value="JOINED"/>
    <property type="molecule type" value="Genomic_DNA"/>
</dbReference>
<dbReference type="EMBL" id="AF222957">
    <property type="protein sequence ID" value="AAF81268.2"/>
    <property type="status" value="JOINED"/>
    <property type="molecule type" value="Genomic_DNA"/>
</dbReference>
<dbReference type="EMBL" id="AF222958">
    <property type="protein sequence ID" value="AAF81268.2"/>
    <property type="status" value="JOINED"/>
    <property type="molecule type" value="Genomic_DNA"/>
</dbReference>
<dbReference type="EMBL" id="AF222959">
    <property type="protein sequence ID" value="AAF81269.2"/>
    <property type="molecule type" value="Genomic_DNA"/>
</dbReference>
<dbReference type="EMBL" id="AF222950">
    <property type="protein sequence ID" value="AAF81269.2"/>
    <property type="status" value="JOINED"/>
    <property type="molecule type" value="Genomic_DNA"/>
</dbReference>
<dbReference type="EMBL" id="AF222951">
    <property type="protein sequence ID" value="AAF81269.2"/>
    <property type="status" value="JOINED"/>
    <property type="molecule type" value="Genomic_DNA"/>
</dbReference>
<dbReference type="EMBL" id="AF222956">
    <property type="protein sequence ID" value="AAF81269.2"/>
    <property type="status" value="JOINED"/>
    <property type="molecule type" value="Genomic_DNA"/>
</dbReference>
<dbReference type="EMBL" id="AF222958">
    <property type="protein sequence ID" value="AAF81269.2"/>
    <property type="status" value="JOINED"/>
    <property type="molecule type" value="Genomic_DNA"/>
</dbReference>
<dbReference type="EMBL" id="AF222959">
    <property type="protein sequence ID" value="AAF81270.2"/>
    <property type="molecule type" value="Genomic_DNA"/>
</dbReference>
<dbReference type="EMBL" id="AF222950">
    <property type="protein sequence ID" value="AAF81270.2"/>
    <property type="status" value="JOINED"/>
    <property type="molecule type" value="Genomic_DNA"/>
</dbReference>
<dbReference type="EMBL" id="AF222951">
    <property type="protein sequence ID" value="AAF81270.2"/>
    <property type="status" value="JOINED"/>
    <property type="molecule type" value="Genomic_DNA"/>
</dbReference>
<dbReference type="EMBL" id="AF222953">
    <property type="protein sequence ID" value="AAF81270.2"/>
    <property type="status" value="JOINED"/>
    <property type="molecule type" value="Genomic_DNA"/>
</dbReference>
<dbReference type="EMBL" id="AF222954">
    <property type="protein sequence ID" value="AAF81270.2"/>
    <property type="status" value="JOINED"/>
    <property type="molecule type" value="Genomic_DNA"/>
</dbReference>
<dbReference type="EMBL" id="AF222955">
    <property type="protein sequence ID" value="AAF81270.2"/>
    <property type="status" value="JOINED"/>
    <property type="molecule type" value="Genomic_DNA"/>
</dbReference>
<dbReference type="EMBL" id="AF222956">
    <property type="protein sequence ID" value="AAF81270.2"/>
    <property type="status" value="JOINED"/>
    <property type="molecule type" value="Genomic_DNA"/>
</dbReference>
<dbReference type="EMBL" id="AF222957">
    <property type="protein sequence ID" value="AAF81270.2"/>
    <property type="status" value="JOINED"/>
    <property type="molecule type" value="Genomic_DNA"/>
</dbReference>
<dbReference type="EMBL" id="AF222958">
    <property type="protein sequence ID" value="AAF81270.2"/>
    <property type="status" value="JOINED"/>
    <property type="molecule type" value="Genomic_DNA"/>
</dbReference>
<dbReference type="EMBL" id="AF222959">
    <property type="protein sequence ID" value="AAF81271.2"/>
    <property type="molecule type" value="Genomic_DNA"/>
</dbReference>
<dbReference type="EMBL" id="AF222949">
    <property type="protein sequence ID" value="AAF81271.2"/>
    <property type="status" value="JOINED"/>
    <property type="molecule type" value="Genomic_DNA"/>
</dbReference>
<dbReference type="EMBL" id="AF222951">
    <property type="protein sequence ID" value="AAF81271.2"/>
    <property type="status" value="JOINED"/>
    <property type="molecule type" value="Genomic_DNA"/>
</dbReference>
<dbReference type="EMBL" id="AF222953">
    <property type="protein sequence ID" value="AAF81271.2"/>
    <property type="status" value="JOINED"/>
    <property type="molecule type" value="Genomic_DNA"/>
</dbReference>
<dbReference type="EMBL" id="AF222954">
    <property type="protein sequence ID" value="AAF81271.2"/>
    <property type="status" value="JOINED"/>
    <property type="molecule type" value="Genomic_DNA"/>
</dbReference>
<dbReference type="EMBL" id="AF222955">
    <property type="protein sequence ID" value="AAF81271.2"/>
    <property type="status" value="JOINED"/>
    <property type="molecule type" value="Genomic_DNA"/>
</dbReference>
<dbReference type="EMBL" id="AF222956">
    <property type="protein sequence ID" value="AAF81271.2"/>
    <property type="status" value="JOINED"/>
    <property type="molecule type" value="Genomic_DNA"/>
</dbReference>
<dbReference type="EMBL" id="AF222957">
    <property type="protein sequence ID" value="AAF81271.2"/>
    <property type="status" value="JOINED"/>
    <property type="molecule type" value="Genomic_DNA"/>
</dbReference>
<dbReference type="EMBL" id="AF222958">
    <property type="protein sequence ID" value="AAF81271.2"/>
    <property type="status" value="JOINED"/>
    <property type="molecule type" value="Genomic_DNA"/>
</dbReference>
<dbReference type="EMBL" id="AF222959">
    <property type="protein sequence ID" value="AAF81272.2"/>
    <property type="molecule type" value="Genomic_DNA"/>
</dbReference>
<dbReference type="EMBL" id="AF222949">
    <property type="protein sequence ID" value="AAF81272.2"/>
    <property type="status" value="JOINED"/>
    <property type="molecule type" value="Genomic_DNA"/>
</dbReference>
<dbReference type="EMBL" id="AF222951">
    <property type="protein sequence ID" value="AAF81272.2"/>
    <property type="status" value="JOINED"/>
    <property type="molecule type" value="Genomic_DNA"/>
</dbReference>
<dbReference type="EMBL" id="AF222955">
    <property type="protein sequence ID" value="AAF81272.2"/>
    <property type="status" value="JOINED"/>
    <property type="molecule type" value="Genomic_DNA"/>
</dbReference>
<dbReference type="EMBL" id="AF222956">
    <property type="protein sequence ID" value="AAF81272.2"/>
    <property type="status" value="JOINED"/>
    <property type="molecule type" value="Genomic_DNA"/>
</dbReference>
<dbReference type="EMBL" id="AF222957">
    <property type="protein sequence ID" value="AAF81272.2"/>
    <property type="status" value="JOINED"/>
    <property type="molecule type" value="Genomic_DNA"/>
</dbReference>
<dbReference type="EMBL" id="AF222958">
    <property type="protein sequence ID" value="AAF81272.2"/>
    <property type="status" value="JOINED"/>
    <property type="molecule type" value="Genomic_DNA"/>
</dbReference>
<dbReference type="EMBL" id="AF222952">
    <property type="status" value="NOT_ANNOTATED_CDS"/>
    <property type="molecule type" value="Genomic_DNA"/>
</dbReference>
<dbReference type="EMBL" id="AK155350">
    <property type="protein sequence ID" value="BAE33209.1"/>
    <property type="molecule type" value="mRNA"/>
</dbReference>
<dbReference type="EMBL" id="AC131676">
    <property type="status" value="NOT_ANNOTATED_CDS"/>
    <property type="molecule type" value="Genomic_DNA"/>
</dbReference>
<dbReference type="EMBL" id="AC157098">
    <property type="status" value="NOT_ANNOTATED_CDS"/>
    <property type="molecule type" value="Genomic_DNA"/>
</dbReference>
<dbReference type="EMBL" id="AC158650">
    <property type="status" value="NOT_ANNOTATED_CDS"/>
    <property type="molecule type" value="Genomic_DNA"/>
</dbReference>
<dbReference type="EMBL" id="U19874">
    <property type="protein sequence ID" value="AAC52155.1"/>
    <property type="molecule type" value="mRNA"/>
</dbReference>
<dbReference type="EMBL" id="U19875">
    <property type="protein sequence ID" value="AAC52156.1"/>
    <property type="molecule type" value="mRNA"/>
</dbReference>
<dbReference type="EMBL" id="L22958">
    <property type="protein sequence ID" value="AAB47773.1"/>
    <property type="molecule type" value="mRNA"/>
</dbReference>
<dbReference type="EMBL" id="AB009397">
    <property type="protein sequence ID" value="BAA32329.1"/>
    <property type="molecule type" value="mRNA"/>
</dbReference>
<dbReference type="CCDS" id="CCDS20385.1">
    <molecule id="Q08874-8"/>
</dbReference>
<dbReference type="CCDS" id="CCDS51861.1">
    <molecule id="Q08874-1"/>
</dbReference>
<dbReference type="CCDS" id="CCDS51862.1">
    <molecule id="Q08874-4"/>
</dbReference>
<dbReference type="PIR" id="A40728">
    <property type="entry name" value="A40728"/>
</dbReference>
<dbReference type="PIR" id="I49244">
    <property type="entry name" value="I49244"/>
</dbReference>
<dbReference type="PIR" id="PD0026">
    <property type="entry name" value="PD0026"/>
</dbReference>
<dbReference type="RefSeq" id="NP_001106669.1">
    <molecule id="Q08874-1"/>
    <property type="nucleotide sequence ID" value="NM_001113198.2"/>
</dbReference>
<dbReference type="RefSeq" id="NP_001171520.1">
    <molecule id="Q08874-4"/>
    <property type="nucleotide sequence ID" value="NM_001178049.2"/>
</dbReference>
<dbReference type="RefSeq" id="NP_032627.1">
    <molecule id="Q08874-8"/>
    <property type="nucleotide sequence ID" value="NM_008601.4"/>
</dbReference>
<dbReference type="RefSeq" id="XP_006505758.1">
    <molecule id="Q08874-9"/>
    <property type="nucleotide sequence ID" value="XM_006505695.5"/>
</dbReference>
<dbReference type="PDB" id="4ATH">
    <property type="method" value="X-ray"/>
    <property type="resolution" value="1.95 A"/>
    <property type="chains" value="A/B=324-403"/>
</dbReference>
<dbReference type="PDB" id="4ATI">
    <property type="method" value="X-ray"/>
    <property type="resolution" value="2.60 A"/>
    <property type="chains" value="A/B=287-403"/>
</dbReference>
<dbReference type="PDB" id="4ATK">
    <property type="method" value="X-ray"/>
    <property type="resolution" value="2.95 A"/>
    <property type="chains" value="A/B=287-403"/>
</dbReference>
<dbReference type="PDB" id="6FX5">
    <property type="method" value="X-ray"/>
    <property type="resolution" value="2.05 A"/>
    <property type="chains" value="A/B=324-403"/>
</dbReference>
<dbReference type="PDB" id="6G1L">
    <property type="method" value="X-ray"/>
    <property type="resolution" value="2.40 A"/>
    <property type="chains" value="A=287-403"/>
</dbReference>
<dbReference type="PDBsum" id="4ATH"/>
<dbReference type="PDBsum" id="4ATI"/>
<dbReference type="PDBsum" id="4ATK"/>
<dbReference type="PDBsum" id="6FX5"/>
<dbReference type="PDBsum" id="6G1L"/>
<dbReference type="SMR" id="Q08874"/>
<dbReference type="BioGRID" id="201427">
    <property type="interactions" value="11"/>
</dbReference>
<dbReference type="FunCoup" id="Q08874">
    <property type="interactions" value="1613"/>
</dbReference>
<dbReference type="IntAct" id="Q08874">
    <property type="interactions" value="1"/>
</dbReference>
<dbReference type="MINT" id="Q08874"/>
<dbReference type="STRING" id="10090.ENSMUSP00000044938"/>
<dbReference type="ChEMBL" id="CHEMBL1075142"/>
<dbReference type="GlyGen" id="Q08874">
    <property type="glycosylation" value="3 sites, 1 O-linked glycan (3 sites)"/>
</dbReference>
<dbReference type="iPTMnet" id="Q08874"/>
<dbReference type="PhosphoSitePlus" id="Q08874"/>
<dbReference type="PaxDb" id="10090-ENSMUSP00000044938"/>
<dbReference type="PeptideAtlas" id="Q08874"/>
<dbReference type="ProteomicsDB" id="295620">
    <molecule id="Q08874-1"/>
</dbReference>
<dbReference type="ProteomicsDB" id="295621">
    <molecule id="Q08874-2"/>
</dbReference>
<dbReference type="ProteomicsDB" id="295622">
    <molecule id="Q08874-3"/>
</dbReference>
<dbReference type="ProteomicsDB" id="295623">
    <molecule id="Q08874-4"/>
</dbReference>
<dbReference type="ProteomicsDB" id="295624">
    <molecule id="Q08874-5"/>
</dbReference>
<dbReference type="ProteomicsDB" id="295625">
    <molecule id="Q08874-6"/>
</dbReference>
<dbReference type="ProteomicsDB" id="295626">
    <molecule id="Q08874-7"/>
</dbReference>
<dbReference type="ProteomicsDB" id="295627">
    <molecule id="Q08874-8"/>
</dbReference>
<dbReference type="ProteomicsDB" id="295628">
    <molecule id="Q08874-9"/>
</dbReference>
<dbReference type="Pumba" id="Q08874"/>
<dbReference type="Antibodypedia" id="923">
    <property type="antibodies" value="951 antibodies from 46 providers"/>
</dbReference>
<dbReference type="DNASU" id="17342"/>
<dbReference type="Ensembl" id="ENSMUST00000043628.13">
    <molecule id="Q08874-8"/>
    <property type="protein sequence ID" value="ENSMUSP00000044459.7"/>
    <property type="gene ID" value="ENSMUSG00000035158.16"/>
</dbReference>
<dbReference type="Ensembl" id="ENSMUST00000043637.14">
    <molecule id="Q08874-1"/>
    <property type="protein sequence ID" value="ENSMUSP00000044938.8"/>
    <property type="gene ID" value="ENSMUSG00000035158.16"/>
</dbReference>
<dbReference type="Ensembl" id="ENSMUST00000101123.10">
    <molecule id="Q08874-4"/>
    <property type="protein sequence ID" value="ENSMUSP00000098683.4"/>
    <property type="gene ID" value="ENSMUSG00000035158.16"/>
</dbReference>
<dbReference type="GeneID" id="17342"/>
<dbReference type="KEGG" id="mmu:17342"/>
<dbReference type="UCSC" id="uc009daz.2">
    <property type="organism name" value="mouse"/>
</dbReference>
<dbReference type="AGR" id="MGI:104554"/>
<dbReference type="CTD" id="4286"/>
<dbReference type="MGI" id="MGI:104554">
    <property type="gene designation" value="Mitf"/>
</dbReference>
<dbReference type="VEuPathDB" id="HostDB:ENSMUSG00000035158"/>
<dbReference type="eggNOG" id="KOG1318">
    <property type="taxonomic scope" value="Eukaryota"/>
</dbReference>
<dbReference type="GeneTree" id="ENSGT00940000156326"/>
<dbReference type="InParanoid" id="Q08874"/>
<dbReference type="OMA" id="GIPMANT"/>
<dbReference type="OrthoDB" id="6242697at2759"/>
<dbReference type="PhylomeDB" id="Q08874"/>
<dbReference type="TreeFam" id="TF317174"/>
<dbReference type="Reactome" id="R-MMU-3232118">
    <property type="pathway name" value="SUMOylation of transcription factors"/>
</dbReference>
<dbReference type="Reactome" id="R-MMU-9824594">
    <property type="pathway name" value="Regulation of MITF-M-dependent genes involved in apoptosis"/>
</dbReference>
<dbReference type="Reactome" id="R-MMU-9856649">
    <property type="pathway name" value="Transcriptional and post-translational regulation of MITF-M expression and activity"/>
</dbReference>
<dbReference type="BioGRID-ORCS" id="17342">
    <property type="hits" value="5 hits in 79 CRISPR screens"/>
</dbReference>
<dbReference type="ChiTaRS" id="Mitf">
    <property type="organism name" value="mouse"/>
</dbReference>
<dbReference type="EvolutionaryTrace" id="Q08874"/>
<dbReference type="PRO" id="PR:Q08874"/>
<dbReference type="Proteomes" id="UP000000589">
    <property type="component" value="Chromosome 6"/>
</dbReference>
<dbReference type="RNAct" id="Q08874">
    <property type="molecule type" value="protein"/>
</dbReference>
<dbReference type="Bgee" id="ENSMUSG00000035158">
    <property type="expression patterns" value="Expressed in pineal body and 244 other cell types or tissues"/>
</dbReference>
<dbReference type="ExpressionAtlas" id="Q08874">
    <property type="expression patterns" value="baseline and differential"/>
</dbReference>
<dbReference type="GO" id="GO:0005737">
    <property type="term" value="C:cytoplasm"/>
    <property type="evidence" value="ECO:0000250"/>
    <property type="project" value="UniProtKB"/>
</dbReference>
<dbReference type="GO" id="GO:0005765">
    <property type="term" value="C:lysosomal membrane"/>
    <property type="evidence" value="ECO:0000250"/>
    <property type="project" value="UniProtKB"/>
</dbReference>
<dbReference type="GO" id="GO:0005654">
    <property type="term" value="C:nucleoplasm"/>
    <property type="evidence" value="ECO:0000304"/>
    <property type="project" value="Reactome"/>
</dbReference>
<dbReference type="GO" id="GO:0005634">
    <property type="term" value="C:nucleus"/>
    <property type="evidence" value="ECO:0000314"/>
    <property type="project" value="MGI"/>
</dbReference>
<dbReference type="GO" id="GO:0032991">
    <property type="term" value="C:protein-containing complex"/>
    <property type="evidence" value="ECO:0007669"/>
    <property type="project" value="Ensembl"/>
</dbReference>
<dbReference type="GO" id="GO:0003682">
    <property type="term" value="F:chromatin binding"/>
    <property type="evidence" value="ECO:0000314"/>
    <property type="project" value="MGI"/>
</dbReference>
<dbReference type="GO" id="GO:0003677">
    <property type="term" value="F:DNA binding"/>
    <property type="evidence" value="ECO:0000314"/>
    <property type="project" value="MGI"/>
</dbReference>
<dbReference type="GO" id="GO:0001228">
    <property type="term" value="F:DNA-binding transcription activator activity, RNA polymerase II-specific"/>
    <property type="evidence" value="ECO:0000314"/>
    <property type="project" value="NTNU_SB"/>
</dbReference>
<dbReference type="GO" id="GO:0003700">
    <property type="term" value="F:DNA-binding transcription factor activity"/>
    <property type="evidence" value="ECO:0000314"/>
    <property type="project" value="MGI"/>
</dbReference>
<dbReference type="GO" id="GO:0000981">
    <property type="term" value="F:DNA-binding transcription factor activity, RNA polymerase II-specific"/>
    <property type="evidence" value="ECO:0000314"/>
    <property type="project" value="MGI"/>
</dbReference>
<dbReference type="GO" id="GO:0070888">
    <property type="term" value="F:E-box binding"/>
    <property type="evidence" value="ECO:0000314"/>
    <property type="project" value="UniProtKB"/>
</dbReference>
<dbReference type="GO" id="GO:0046983">
    <property type="term" value="F:protein dimerization activity"/>
    <property type="evidence" value="ECO:0000353"/>
    <property type="project" value="UniProtKB"/>
</dbReference>
<dbReference type="GO" id="GO:0000978">
    <property type="term" value="F:RNA polymerase II cis-regulatory region sequence-specific DNA binding"/>
    <property type="evidence" value="ECO:0000314"/>
    <property type="project" value="NTNU_SB"/>
</dbReference>
<dbReference type="GO" id="GO:0043565">
    <property type="term" value="F:sequence-specific DNA binding"/>
    <property type="evidence" value="ECO:0000247"/>
    <property type="project" value="MGI"/>
</dbReference>
<dbReference type="GO" id="GO:0046849">
    <property type="term" value="P:bone remodeling"/>
    <property type="evidence" value="ECO:0000315"/>
    <property type="project" value="MGI"/>
</dbReference>
<dbReference type="GO" id="GO:0043010">
    <property type="term" value="P:camera-type eye development"/>
    <property type="evidence" value="ECO:0000316"/>
    <property type="project" value="MGI"/>
</dbReference>
<dbReference type="GO" id="GO:0030154">
    <property type="term" value="P:cell differentiation"/>
    <property type="evidence" value="ECO:0000315"/>
    <property type="project" value="MGI"/>
</dbReference>
<dbReference type="GO" id="GO:0045165">
    <property type="term" value="P:cell fate commitment"/>
    <property type="evidence" value="ECO:0000315"/>
    <property type="project" value="MGI"/>
</dbReference>
<dbReference type="GO" id="GO:1902362">
    <property type="term" value="P:melanocyte apoptotic process"/>
    <property type="evidence" value="ECO:0000315"/>
    <property type="project" value="MGI"/>
</dbReference>
<dbReference type="GO" id="GO:0030318">
    <property type="term" value="P:melanocyte differentiation"/>
    <property type="evidence" value="ECO:0000315"/>
    <property type="project" value="MGI"/>
</dbReference>
<dbReference type="GO" id="GO:0043066">
    <property type="term" value="P:negative regulation of apoptotic process"/>
    <property type="evidence" value="ECO:0000315"/>
    <property type="project" value="MGI"/>
</dbReference>
<dbReference type="GO" id="GO:0030336">
    <property type="term" value="P:negative regulation of cell migration"/>
    <property type="evidence" value="ECO:0007669"/>
    <property type="project" value="Ensembl"/>
</dbReference>
<dbReference type="GO" id="GO:0000122">
    <property type="term" value="P:negative regulation of transcription by RNA polymerase II"/>
    <property type="evidence" value="ECO:0007669"/>
    <property type="project" value="Ensembl"/>
</dbReference>
<dbReference type="GO" id="GO:0030316">
    <property type="term" value="P:osteoclast differentiation"/>
    <property type="evidence" value="ECO:0000315"/>
    <property type="project" value="MGI"/>
</dbReference>
<dbReference type="GO" id="GO:0043473">
    <property type="term" value="P:pigmentation"/>
    <property type="evidence" value="ECO:0000315"/>
    <property type="project" value="MGI"/>
</dbReference>
<dbReference type="GO" id="GO:0045893">
    <property type="term" value="P:positive regulation of DNA-templated transcription"/>
    <property type="evidence" value="ECO:0000314"/>
    <property type="project" value="MGI"/>
</dbReference>
<dbReference type="GO" id="GO:2000144">
    <property type="term" value="P:positive regulation of DNA-templated transcription initiation"/>
    <property type="evidence" value="ECO:0007669"/>
    <property type="project" value="Ensembl"/>
</dbReference>
<dbReference type="GO" id="GO:0010628">
    <property type="term" value="P:positive regulation of gene expression"/>
    <property type="evidence" value="ECO:0007669"/>
    <property type="project" value="Ensembl"/>
</dbReference>
<dbReference type="GO" id="GO:0045944">
    <property type="term" value="P:positive regulation of transcription by RNA polymerase II"/>
    <property type="evidence" value="ECO:0000314"/>
    <property type="project" value="BHF-UCL"/>
</dbReference>
<dbReference type="GO" id="GO:0065003">
    <property type="term" value="P:protein-containing complex assembly"/>
    <property type="evidence" value="ECO:0007669"/>
    <property type="project" value="Ensembl"/>
</dbReference>
<dbReference type="GO" id="GO:0042127">
    <property type="term" value="P:regulation of cell population proliferation"/>
    <property type="evidence" value="ECO:0000314"/>
    <property type="project" value="MGI"/>
</dbReference>
<dbReference type="GO" id="GO:0010468">
    <property type="term" value="P:regulation of gene expression"/>
    <property type="evidence" value="ECO:0000315"/>
    <property type="project" value="MGI"/>
</dbReference>
<dbReference type="GO" id="GO:0045670">
    <property type="term" value="P:regulation of osteoclast differentiation"/>
    <property type="evidence" value="ECO:0000315"/>
    <property type="project" value="MGI"/>
</dbReference>
<dbReference type="GO" id="GO:0006357">
    <property type="term" value="P:regulation of transcription by RNA polymerase II"/>
    <property type="evidence" value="ECO:0000314"/>
    <property type="project" value="MGI"/>
</dbReference>
<dbReference type="GO" id="GO:0016055">
    <property type="term" value="P:Wnt signaling pathway"/>
    <property type="evidence" value="ECO:0000314"/>
    <property type="project" value="MGI"/>
</dbReference>
<dbReference type="CDD" id="cd18926">
    <property type="entry name" value="bHLHzip_MITF"/>
    <property type="match status" value="1"/>
</dbReference>
<dbReference type="FunFam" id="4.10.280.10:FF:000003">
    <property type="entry name" value="microphthalmia-associated transcription factor isoform X1"/>
    <property type="match status" value="1"/>
</dbReference>
<dbReference type="Gene3D" id="4.10.280.10">
    <property type="entry name" value="Helix-loop-helix DNA-binding domain"/>
    <property type="match status" value="1"/>
</dbReference>
<dbReference type="InterPro" id="IPR011598">
    <property type="entry name" value="bHLH_dom"/>
</dbReference>
<dbReference type="InterPro" id="IPR036638">
    <property type="entry name" value="HLH_DNA-bd_sf"/>
</dbReference>
<dbReference type="InterPro" id="IPR021802">
    <property type="entry name" value="MiT/TFE_C"/>
</dbReference>
<dbReference type="InterPro" id="IPR031867">
    <property type="entry name" value="MiT/TFE_N"/>
</dbReference>
<dbReference type="PANTHER" id="PTHR45776:SF4">
    <property type="entry name" value="MICROPHTHALMIA-ASSOCIATED TRANSCRIPTION FACTOR"/>
    <property type="match status" value="1"/>
</dbReference>
<dbReference type="PANTHER" id="PTHR45776">
    <property type="entry name" value="MIP04163P"/>
    <property type="match status" value="1"/>
</dbReference>
<dbReference type="Pfam" id="PF11851">
    <property type="entry name" value="DUF3371"/>
    <property type="match status" value="1"/>
</dbReference>
<dbReference type="Pfam" id="PF00010">
    <property type="entry name" value="HLH"/>
    <property type="match status" value="1"/>
</dbReference>
<dbReference type="Pfam" id="PF15951">
    <property type="entry name" value="MITF_TFEB_C_3_N"/>
    <property type="match status" value="1"/>
</dbReference>
<dbReference type="SMART" id="SM00353">
    <property type="entry name" value="HLH"/>
    <property type="match status" value="1"/>
</dbReference>
<dbReference type="SUPFAM" id="SSF47459">
    <property type="entry name" value="HLH, helix-loop-helix DNA-binding domain"/>
    <property type="match status" value="1"/>
</dbReference>
<dbReference type="PROSITE" id="PS50888">
    <property type="entry name" value="BHLH"/>
    <property type="match status" value="1"/>
</dbReference>
<protein>
    <recommendedName>
        <fullName>Microphthalmia-associated transcription factor</fullName>
    </recommendedName>
</protein>
<comment type="function">
    <text evidence="2">Transcription factor that acts as a master regulator of melanocyte survival and differentiation as well as melanosome biogenesis (By similarity). Binds to M-boxes (5'-TCATGTG-3') and symmetrical DNA sequences (E-boxes) (5'-CACGTG-3') found in the promoter of pigmentation genes, such as tyrosinase (TYR) (By similarity). Involved in the cellular response to amino acid availability by acting downstream of MTOR: in the presence of nutrients, MITF phosphorylation by MTOR promotes its inactivation (By similarity). Upon starvation or lysosomal stress, inhibition of MTOR induces MITF dephosphorylation, resulting in transcription factor activity (By similarity). Plays an important role in melanocyte development by regulating the expression of tyrosinase (TYR) and tyrosinase-related protein 1 (TYRP1) (By similarity). Plays a critical role in the differentiation of various cell types, such as neural crest-derived melanocytes, mast cells, osteoclasts and optic cup-derived retinal pigment epithelium (By similarity).</text>
</comment>
<comment type="subunit">
    <text evidence="2 7 8 9">Homodimer or heterodimer; dimerization is mediated via the coiled coil region (PubMed:23207919). Efficient DNA binding requires dimerization with another bHLH protein (PubMed:23207919). Binds DNA in the form of homodimer or heterodimer with either TFE3, TFEB or TFEC (PubMed:23207919). Interacts with small GTPases Rag (RagA/RRAGA, RagB/RRAGB, RagC/RRAGC and/or RagD/RRAGD); promoting its recruitment to lysosomal membrane in the presence of nutrients (By similarity). Interacts with KARS1 (PubMed:14975237). Identified in a complex with HINT1 and CTNNB1 (By similarity). Interacts with VSX2 (PubMed:23028343).</text>
</comment>
<comment type="subcellular location">
    <subcellularLocation>
        <location evidence="12">Nucleus</location>
    </subcellularLocation>
    <subcellularLocation>
        <location evidence="2">Cytoplasm</location>
    </subcellularLocation>
    <subcellularLocation>
        <location evidence="2">Lysosome membrane</location>
    </subcellularLocation>
    <text evidence="2">When nutrients are present, recruited to the lysosomal membrane via association with GDP-bound RagC/RRAGC (or RagD/RRAGD): it is then phosphorylated by MTOR. Phosphorylation by MTOR promotes ubiquitination and degradation. Conversely, inhibition of mTORC1, starvation and lysosomal disruption, promotes dephosphorylation and translocation to the nucleus. Phosphorylation by MARK3/cTAK1 promotes association with 14-3-3/YWHA adapters and retention in the cytosol.</text>
</comment>
<comment type="alternative products">
    <event type="alternative splicing"/>
    <isoform>
        <id>Q08874-1</id>
        <name>A</name>
        <sequence type="displayed"/>
    </isoform>
    <isoform>
        <id>Q08874-2</id>
        <name>A1</name>
        <sequence type="described" ref="VSP_002133"/>
    </isoform>
    <isoform>
        <id>Q08874-3</id>
        <name>A2</name>
        <sequence type="described" ref="VSP_002131 VSP_002134 VSP_002136"/>
    </isoform>
    <isoform>
        <id>Q08874-4</id>
        <name>H</name>
        <sequence type="described" ref="VSP_002129"/>
    </isoform>
    <isoform>
        <id>Q08874-5</id>
        <name>H1</name>
        <sequence type="described" ref="VSP_002129 VSP_002132"/>
    </isoform>
    <isoform>
        <id>Q08874-6</id>
        <name>H2</name>
        <sequence type="described" ref="VSP_002129 VSP_002132 VSP_002135"/>
    </isoform>
    <isoform>
        <id>Q08874-7</id>
        <name>H3</name>
        <sequence type="described" ref="VSP_002129 VSP_002133"/>
    </isoform>
    <isoform>
        <id>Q08874-8</id>
        <name>M</name>
        <sequence type="described" ref="VSP_002130"/>
    </isoform>
    <isoform>
        <id>Q08874-9</id>
        <name>M1</name>
        <sequence type="described" ref="VSP_002130 VSP_002134"/>
    </isoform>
</comment>
<comment type="tissue specificity">
    <text evidence="11">In the adult, expressed at high levels in the heart, skin, skeletal muscle, intestine, stomach, kidney, ovary, lung, spleen and brain. In the embryo, expressed in developing eye, ear, skin and heart. Isoform M is expressed in melanocytes and also in the embryonic and adult heart while isoform A and isoform H are more widely expressed.</text>
</comment>
<comment type="domain">
    <text evidence="15">The leucine zipper region is part of a larger coiled coil.</text>
</comment>
<comment type="PTM">
    <text evidence="2">When nutrients are present, phosphorylation by MTOR at Ser-5 via non-canonical mTORC1 pathway promotes ubiquitination by the SCF(BTRC) complex, followed by degradation (By similarity). Phosphorylation at Ser-405 significantly enhances the ability to bind the tyrosinase promoter (By similarity). Phosphorylation by MARK3/cTAK1 at Ser-280 promotes association with 14-3-3/YWHA adapters and retention in the cytosol (By similarity). Phosphorylated at Ser-180 and Ser-516 following KIT signaling, triggering a short live activation: Phosphorylation at Ser-180 and Ser-516 by MAPK and RPS6KA1, respectively, activate the transcription factor activity but also promote ubiquitination and subsequent degradation by the proteasome (By similarity). Phosphorylated in response to blue light (415nm) (By similarity).</text>
</comment>
<comment type="PTM">
    <text evidence="2">Ubiquitinated by the SCF(BTRC) and SCF(FBXW11) complexes following phosphorylation ar Ser-5 by MTOR, leading to its degradation by the proteasome (By similarity). Ubiquitinated following phosphorylation at Ser-180, leading to subsequent degradation by the proteasome (By similarity). Deubiquitinated by USP13, preventing its degradation (By similarity).</text>
</comment>
<comment type="disease">
    <text evidence="6 10">Defects in Mitf are the cause of microphthalmia (mi), a condition characterized by loss of pigmentation; reduced eye size; failure of secondary bone resorption; reduced numbers of mast cells; early onset of deafness, and which gives rise to a number of different phenotypes. Among them, microphthalmia-eyeless white (mi-ew) has a normal appearance at the heterozygous state, but shows white coat; eyes almost absent and eyelids never open at homozygosity. Microphthalmia-black and white spot (mi-bws) is normal at heterozygosity, and presents white spots and black eyes at homozygous state. Microphthalmia-white (mi-wh) has reduced coat color and eye pigmentation; spots on toes, tail and belly; inner ear defects at heterozygosity, and at homozygosity shows white coat; eyes small and inner iris slightly pigmented; spinal ganglia, adrenal medulla and dermis smaller than normal, and inner ear defects. Microphthalmia-vitiligo (mi-vi) has normal phenotype at heterozygosity, but shows gradual depigmentation of coat, skin and eyes; and retinal degeneration at homozygosity. Microphthalmia-spotted (mi-sp) shows normal phenotype; at homozygosity, however, tyrosinase activity in skin is reduced. Microphthalmia-defective irism (mi-di) has reduced retinal pigmentation at heterozygosity and shows white coat; eyes of reduced sized and possible mild osteoporosis at homozygosity. Microphthalmia-cloudy eyed (mi-ce) has a normal appearance at the heterozygous state, but shows white coat; eyes of reduced size and unpigmented at homozygosity. Microphthalmia-red-eyed white (mi-rw) has a normal appearance at the homozygous state, but shows white coat with one or more pigmented spots around the head/and or tail; eyes are small and red at heterozygosity. Microphthalmia-black-eyed white (mi-bw) shows a white coat but normal sized eyes which reamin black at homozygosity.</text>
</comment>
<comment type="similarity">
    <text evidence="14">Belongs to the MiT/TFE family.</text>
</comment>
<keyword id="KW-0002">3D-structure</keyword>
<keyword id="KW-0010">Activator</keyword>
<keyword id="KW-0025">Alternative splicing</keyword>
<keyword id="KW-0175">Coiled coil</keyword>
<keyword id="KW-0963">Cytoplasm</keyword>
<keyword id="KW-0209">Deafness</keyword>
<keyword id="KW-0217">Developmental protein</keyword>
<keyword id="KW-0225">Disease variant</keyword>
<keyword id="KW-0238">DNA-binding</keyword>
<keyword id="KW-1017">Isopeptide bond</keyword>
<keyword id="KW-0458">Lysosome</keyword>
<keyword id="KW-0472">Membrane</keyword>
<keyword id="KW-0539">Nucleus</keyword>
<keyword id="KW-0597">Phosphoprotein</keyword>
<keyword id="KW-1185">Reference proteome</keyword>
<keyword id="KW-0804">Transcription</keyword>
<keyword id="KW-0805">Transcription regulation</keyword>
<keyword id="KW-0832">Ubl conjugation</keyword>
<accession>Q08874</accession>
<accession>A0A0N4SVJ5</accession>
<accession>O08885</accession>
<accession>O88203</accession>
<accession>Q08843</accession>
<accession>Q3U2D2</accession>
<accession>Q60781</accession>
<accession>Q60782</accession>
<accession>Q9JIJ0</accession>
<accession>Q9JIJ1</accession>
<accession>Q9JIJ2</accession>
<accession>Q9JIJ3</accession>
<accession>Q9JIJ4</accession>
<accession>Q9JIJ5</accession>
<accession>Q9JIJ6</accession>
<accession>Q9JKX9</accession>
<evidence type="ECO:0000250" key="1"/>
<evidence type="ECO:0000250" key="2">
    <source>
        <dbReference type="UniProtKB" id="O75030"/>
    </source>
</evidence>
<evidence type="ECO:0000255" key="3"/>
<evidence type="ECO:0000255" key="4">
    <source>
        <dbReference type="PROSITE-ProRule" id="PRU00981"/>
    </source>
</evidence>
<evidence type="ECO:0000256" key="5">
    <source>
        <dbReference type="SAM" id="MobiDB-lite"/>
    </source>
</evidence>
<evidence type="ECO:0000269" key="6">
    <source>
    </source>
</evidence>
<evidence type="ECO:0000269" key="7">
    <source>
    </source>
</evidence>
<evidence type="ECO:0000269" key="8">
    <source>
    </source>
</evidence>
<evidence type="ECO:0000269" key="9">
    <source>
    </source>
</evidence>
<evidence type="ECO:0000269" key="10">
    <source>
    </source>
</evidence>
<evidence type="ECO:0000269" key="11">
    <source>
    </source>
</evidence>
<evidence type="ECO:0000269" key="12">
    <source>
    </source>
</evidence>
<evidence type="ECO:0000303" key="13">
    <source>
    </source>
</evidence>
<evidence type="ECO:0000305" key="14"/>
<evidence type="ECO:0000305" key="15">
    <source>
    </source>
</evidence>
<evidence type="ECO:0000312" key="16">
    <source>
        <dbReference type="EMBL" id="BAE33209.1"/>
    </source>
</evidence>
<evidence type="ECO:0007744" key="17">
    <source>
        <dbReference type="PDB" id="4ATH"/>
    </source>
</evidence>
<evidence type="ECO:0007744" key="18">
    <source>
        <dbReference type="PDB" id="4ATI"/>
    </source>
</evidence>
<evidence type="ECO:0007744" key="19">
    <source>
        <dbReference type="PDB" id="4ATK"/>
    </source>
</evidence>
<evidence type="ECO:0007744" key="20">
    <source>
    </source>
</evidence>
<evidence type="ECO:0007829" key="21">
    <source>
        <dbReference type="PDB" id="4ATH"/>
    </source>
</evidence>
<evidence type="ECO:0007829" key="22">
    <source>
        <dbReference type="PDB" id="4ATI"/>
    </source>
</evidence>
<evidence type="ECO:0007829" key="23">
    <source>
        <dbReference type="PDB" id="6FX5"/>
    </source>
</evidence>
<organism>
    <name type="scientific">Mus musculus</name>
    <name type="common">Mouse</name>
    <dbReference type="NCBI Taxonomy" id="10090"/>
    <lineage>
        <taxon>Eukaryota</taxon>
        <taxon>Metazoa</taxon>
        <taxon>Chordata</taxon>
        <taxon>Craniata</taxon>
        <taxon>Vertebrata</taxon>
        <taxon>Euteleostomi</taxon>
        <taxon>Mammalia</taxon>
        <taxon>Eutheria</taxon>
        <taxon>Euarchontoglires</taxon>
        <taxon>Glires</taxon>
        <taxon>Rodentia</taxon>
        <taxon>Myomorpha</taxon>
        <taxon>Muroidea</taxon>
        <taxon>Muridae</taxon>
        <taxon>Murinae</taxon>
        <taxon>Mus</taxon>
        <taxon>Mus</taxon>
    </lineage>
</organism>
<reference key="1">
    <citation type="journal article" date="1993" name="Cell">
        <title>Mutations at the mouse microphthalmia locus are associated with defects in a gene encoding a novel basic-helix-loop-helix-zipper protein.</title>
        <authorList>
            <person name="Hodgkinson C.A."/>
            <person name="Moore K.J."/>
            <person name="Nakayama A."/>
            <person name="Steingrimsson E."/>
            <person name="Copeland N.G."/>
            <person name="Jenkins N.A."/>
            <person name="Arnheiter H."/>
        </authorList>
    </citation>
    <scope>NUCLEOTIDE SEQUENCE [MRNA] (ISOFORMS M AND M1)</scope>
    <scope>TISSUE SPECIFICITY</scope>
    <scope>VARIANTS MI AND MI-WS</scope>
    <source>
        <tissue>Melanocyte</tissue>
    </source>
</reference>
<reference key="2">
    <citation type="journal article" date="2000" name="Genetics">
        <title>Genomic, transcriptional and mutational analysis of the mouse microphthalmia locus.</title>
        <authorList>
            <person name="Hallsson J.H."/>
            <person name="Favor J."/>
            <person name="Hodgkinson C."/>
            <person name="Glaser T."/>
            <person name="Lamoreux M.L."/>
            <person name="Magnusdottir R."/>
            <person name="Gunnarsson G.J."/>
            <person name="Sweet H.O."/>
            <person name="Copeland N.G."/>
            <person name="Jenkins N.A."/>
            <person name="Steingrimsson E."/>
        </authorList>
    </citation>
    <scope>NUCLEOTIDE SEQUENCE [GENOMIC DNA]</scope>
    <scope>ALTERNATIVE SPLICING</scope>
    <scope>MUTAGENESIS</scope>
    <source>
        <strain>129/Sv</strain>
        <tissue>Heart</tissue>
    </source>
</reference>
<reference key="3">
    <citation type="submission" date="2004-02" db="EMBL/GenBank/DDBJ databases">
        <authorList>
            <person name="Hallsson J.H."/>
            <person name="Favor J."/>
            <person name="Hodgkinson C."/>
            <person name="Glaser T."/>
            <person name="Lamoreux M.L."/>
            <person name="Magnusdottir R."/>
            <person name="Gunnarsson G.J."/>
            <person name="Sweet H.O."/>
            <person name="Copeland N.G."/>
            <person name="Jenkins N.A."/>
            <person name="Steingrimsson E."/>
        </authorList>
    </citation>
    <scope>SEQUENCE REVISION TO 41; 48; 52 AND 91</scope>
</reference>
<reference key="4">
    <citation type="journal article" date="2005" name="Science">
        <title>The transcriptional landscape of the mammalian genome.</title>
        <authorList>
            <person name="Carninci P."/>
            <person name="Kasukawa T."/>
            <person name="Katayama S."/>
            <person name="Gough J."/>
            <person name="Frith M.C."/>
            <person name="Maeda N."/>
            <person name="Oyama R."/>
            <person name="Ravasi T."/>
            <person name="Lenhard B."/>
            <person name="Wells C."/>
            <person name="Kodzius R."/>
            <person name="Shimokawa K."/>
            <person name="Bajic V.B."/>
            <person name="Brenner S.E."/>
            <person name="Batalov S."/>
            <person name="Forrest A.R."/>
            <person name="Zavolan M."/>
            <person name="Davis M.J."/>
            <person name="Wilming L.G."/>
            <person name="Aidinis V."/>
            <person name="Allen J.E."/>
            <person name="Ambesi-Impiombato A."/>
            <person name="Apweiler R."/>
            <person name="Aturaliya R.N."/>
            <person name="Bailey T.L."/>
            <person name="Bansal M."/>
            <person name="Baxter L."/>
            <person name="Beisel K.W."/>
            <person name="Bersano T."/>
            <person name="Bono H."/>
            <person name="Chalk A.M."/>
            <person name="Chiu K.P."/>
            <person name="Choudhary V."/>
            <person name="Christoffels A."/>
            <person name="Clutterbuck D.R."/>
            <person name="Crowe M.L."/>
            <person name="Dalla E."/>
            <person name="Dalrymple B.P."/>
            <person name="de Bono B."/>
            <person name="Della Gatta G."/>
            <person name="di Bernardo D."/>
            <person name="Down T."/>
            <person name="Engstrom P."/>
            <person name="Fagiolini M."/>
            <person name="Faulkner G."/>
            <person name="Fletcher C.F."/>
            <person name="Fukushima T."/>
            <person name="Furuno M."/>
            <person name="Futaki S."/>
            <person name="Gariboldi M."/>
            <person name="Georgii-Hemming P."/>
            <person name="Gingeras T.R."/>
            <person name="Gojobori T."/>
            <person name="Green R.E."/>
            <person name="Gustincich S."/>
            <person name="Harbers M."/>
            <person name="Hayashi Y."/>
            <person name="Hensch T.K."/>
            <person name="Hirokawa N."/>
            <person name="Hill D."/>
            <person name="Huminiecki L."/>
            <person name="Iacono M."/>
            <person name="Ikeo K."/>
            <person name="Iwama A."/>
            <person name="Ishikawa T."/>
            <person name="Jakt M."/>
            <person name="Kanapin A."/>
            <person name="Katoh M."/>
            <person name="Kawasawa Y."/>
            <person name="Kelso J."/>
            <person name="Kitamura H."/>
            <person name="Kitano H."/>
            <person name="Kollias G."/>
            <person name="Krishnan S.P."/>
            <person name="Kruger A."/>
            <person name="Kummerfeld S.K."/>
            <person name="Kurochkin I.V."/>
            <person name="Lareau L.F."/>
            <person name="Lazarevic D."/>
            <person name="Lipovich L."/>
            <person name="Liu J."/>
            <person name="Liuni S."/>
            <person name="McWilliam S."/>
            <person name="Madan Babu M."/>
            <person name="Madera M."/>
            <person name="Marchionni L."/>
            <person name="Matsuda H."/>
            <person name="Matsuzawa S."/>
            <person name="Miki H."/>
            <person name="Mignone F."/>
            <person name="Miyake S."/>
            <person name="Morris K."/>
            <person name="Mottagui-Tabar S."/>
            <person name="Mulder N."/>
            <person name="Nakano N."/>
            <person name="Nakauchi H."/>
            <person name="Ng P."/>
            <person name="Nilsson R."/>
            <person name="Nishiguchi S."/>
            <person name="Nishikawa S."/>
            <person name="Nori F."/>
            <person name="Ohara O."/>
            <person name="Okazaki Y."/>
            <person name="Orlando V."/>
            <person name="Pang K.C."/>
            <person name="Pavan W.J."/>
            <person name="Pavesi G."/>
            <person name="Pesole G."/>
            <person name="Petrovsky N."/>
            <person name="Piazza S."/>
            <person name="Reed J."/>
            <person name="Reid J.F."/>
            <person name="Ring B.Z."/>
            <person name="Ringwald M."/>
            <person name="Rost B."/>
            <person name="Ruan Y."/>
            <person name="Salzberg S.L."/>
            <person name="Sandelin A."/>
            <person name="Schneider C."/>
            <person name="Schoenbach C."/>
            <person name="Sekiguchi K."/>
            <person name="Semple C.A."/>
            <person name="Seno S."/>
            <person name="Sessa L."/>
            <person name="Sheng Y."/>
            <person name="Shibata Y."/>
            <person name="Shimada H."/>
            <person name="Shimada K."/>
            <person name="Silva D."/>
            <person name="Sinclair B."/>
            <person name="Sperling S."/>
            <person name="Stupka E."/>
            <person name="Sugiura K."/>
            <person name="Sultana R."/>
            <person name="Takenaka Y."/>
            <person name="Taki K."/>
            <person name="Tammoja K."/>
            <person name="Tan S.L."/>
            <person name="Tang S."/>
            <person name="Taylor M.S."/>
            <person name="Tegner J."/>
            <person name="Teichmann S.A."/>
            <person name="Ueda H.R."/>
            <person name="van Nimwegen E."/>
            <person name="Verardo R."/>
            <person name="Wei C.L."/>
            <person name="Yagi K."/>
            <person name="Yamanishi H."/>
            <person name="Zabarovsky E."/>
            <person name="Zhu S."/>
            <person name="Zimmer A."/>
            <person name="Hide W."/>
            <person name="Bult C."/>
            <person name="Grimmond S.M."/>
            <person name="Teasdale R.D."/>
            <person name="Liu E.T."/>
            <person name="Brusic V."/>
            <person name="Quackenbush J."/>
            <person name="Wahlestedt C."/>
            <person name="Mattick J.S."/>
            <person name="Hume D.A."/>
            <person name="Kai C."/>
            <person name="Sasaki D."/>
            <person name="Tomaru Y."/>
            <person name="Fukuda S."/>
            <person name="Kanamori-Katayama M."/>
            <person name="Suzuki M."/>
            <person name="Aoki J."/>
            <person name="Arakawa T."/>
            <person name="Iida J."/>
            <person name="Imamura K."/>
            <person name="Itoh M."/>
            <person name="Kato T."/>
            <person name="Kawaji H."/>
            <person name="Kawagashira N."/>
            <person name="Kawashima T."/>
            <person name="Kojima M."/>
            <person name="Kondo S."/>
            <person name="Konno H."/>
            <person name="Nakano K."/>
            <person name="Ninomiya N."/>
            <person name="Nishio T."/>
            <person name="Okada M."/>
            <person name="Plessy C."/>
            <person name="Shibata K."/>
            <person name="Shiraki T."/>
            <person name="Suzuki S."/>
            <person name="Tagami M."/>
            <person name="Waki K."/>
            <person name="Watahiki A."/>
            <person name="Okamura-Oho Y."/>
            <person name="Suzuki H."/>
            <person name="Kawai J."/>
            <person name="Hayashizaki Y."/>
        </authorList>
    </citation>
    <scope>NUCLEOTIDE SEQUENCE [LARGE SCALE MRNA]</scope>
    <source>
        <strain evidence="16">NOD</strain>
    </source>
</reference>
<reference key="5">
    <citation type="journal article" date="2009" name="PLoS Biol.">
        <title>Lineage-specific biology revealed by a finished genome assembly of the mouse.</title>
        <authorList>
            <person name="Church D.M."/>
            <person name="Goodstadt L."/>
            <person name="Hillier L.W."/>
            <person name="Zody M.C."/>
            <person name="Goldstein S."/>
            <person name="She X."/>
            <person name="Bult C.J."/>
            <person name="Agarwala R."/>
            <person name="Cherry J.L."/>
            <person name="DiCuccio M."/>
            <person name="Hlavina W."/>
            <person name="Kapustin Y."/>
            <person name="Meric P."/>
            <person name="Maglott D."/>
            <person name="Birtle Z."/>
            <person name="Marques A.C."/>
            <person name="Graves T."/>
            <person name="Zhou S."/>
            <person name="Teague B."/>
            <person name="Potamousis K."/>
            <person name="Churas C."/>
            <person name="Place M."/>
            <person name="Herschleb J."/>
            <person name="Runnheim R."/>
            <person name="Forrest D."/>
            <person name="Amos-Landgraf J."/>
            <person name="Schwartz D.C."/>
            <person name="Cheng Z."/>
            <person name="Lindblad-Toh K."/>
            <person name="Eichler E.E."/>
            <person name="Ponting C.P."/>
        </authorList>
    </citation>
    <scope>NUCLEOTIDE SEQUENCE [LARGE SCALE GENOMIC DNA]</scope>
    <source>
        <strain>C57BL/6J</strain>
    </source>
</reference>
<reference key="6">
    <citation type="journal article" date="1994" name="Nat. Genet.">
        <title>Molecular basis of mouse microphthalmia (mi) mutations helps explain their developmental and phenotypic consequences.</title>
        <authorList>
            <person name="Steingrimsson E."/>
            <person name="Moore K.J."/>
            <person name="Lamoreux M.L."/>
            <person name="Ferre-D'Amare A.R."/>
            <person name="Burley S.K."/>
            <person name="Sanders Zimring D.C."/>
            <person name="Skow L.C."/>
            <person name="Hodgkinson C.A."/>
            <person name="Arnheiter H."/>
            <person name="Copeland N.G."/>
            <person name="Jenkins N.A."/>
        </authorList>
    </citation>
    <scope>PARTIAL NUCLEOTIDE SEQUENCE [MRNA] (ISOFORMS H AND M)</scope>
    <scope>VARIANTS</scope>
    <source>
        <strain>C57BL/6J</strain>
        <tissue>Heart</tissue>
        <tissue>Melanocyte</tissue>
    </source>
</reference>
<reference key="7">
    <citation type="journal article" date="1993" name="J. Biol. Chem.">
        <title>A helix-loop-helix transcription factor-like gene is located at the mi locus.</title>
        <authorList>
            <person name="Hughes M.J."/>
            <person name="Lingrel J.B."/>
            <person name="Krakowsky J.M."/>
            <person name="Anderson K.P."/>
        </authorList>
    </citation>
    <scope>NUCLEOTIDE SEQUENCE [MRNA] OF 345-392</scope>
    <source>
        <strain>C57BL/6J</strain>
        <tissue>Heart</tissue>
    </source>
</reference>
<reference key="8">
    <citation type="journal article" date="1998" name="Biochem. Biophys. Res. Commun.">
        <title>Identification of a novel isoform of microphthalmia-associated transcription factor that is enriched in retinal pigment epithelium.</title>
        <authorList>
            <person name="Amae S."/>
            <person name="Fuse N."/>
            <person name="Yasumoto K."/>
            <person name="Sato S."/>
            <person name="Yajima I."/>
            <person name="Yamamoto H."/>
            <person name="Udono T."/>
            <person name="Durlu Y.K."/>
            <person name="Tamai M."/>
            <person name="Takahashi K."/>
            <person name="Shibahara S."/>
        </authorList>
    </citation>
    <scope>PARTIAL NUCLEOTIDE SEQUENCE [MRNA] (ISOFORM A)</scope>
</reference>
<reference key="9">
    <citation type="journal article" date="1996" name="Mol. Cell. Biol.">
        <title>The recessive phenotype displayed by a dominant negative microphthalmia-associated transcription factor mutant is a result of impaired nucleation potential.</title>
        <authorList>
            <person name="Takebayashi K."/>
            <person name="Chida K."/>
            <person name="Tsukamoto I."/>
            <person name="Morii E."/>
            <person name="Munakata H."/>
            <person name="Arnheiter H."/>
            <person name="Kuroki T."/>
            <person name="Kitamura Y."/>
            <person name="Nomura S."/>
        </authorList>
    </citation>
    <scope>SUBCELLULAR LOCATION</scope>
</reference>
<reference key="10">
    <citation type="journal article" date="2004" name="Immunity">
        <title>The function of lysyl-tRNA synthetase and Ap4A as signaling regulators of MITF activity in FcepsilonRI-activated mast cells.</title>
        <authorList>
            <person name="Lee Y.N."/>
            <person name="Nechushtan H."/>
            <person name="Figov N."/>
            <person name="Razin E."/>
        </authorList>
    </citation>
    <scope>INTERACTION WITH KARS1</scope>
</reference>
<reference key="11">
    <citation type="journal article" date="1999" name="Hum. Mol. Genet.">
        <title>An L1 element intronic insertion in the black-eyed white (Mitfmi-bw) gene: the loss of a single Mitf isoform responsible for the pigmentary defect and inner ear deafness.</title>
        <authorList>
            <person name="Yajima I."/>
            <person name="Sato S."/>
            <person name="Kimura T."/>
            <person name="Yasumoto K."/>
            <person name="Shibahara S."/>
            <person name="Goding C.R."/>
            <person name="Yamamoto H."/>
        </authorList>
    </citation>
    <scope>INVOLVEMENT IN MI-BW</scope>
</reference>
<reference key="12">
    <citation type="journal article" date="2010" name="Cell">
        <title>A tissue-specific atlas of mouse protein phosphorylation and expression.</title>
        <authorList>
            <person name="Huttlin E.L."/>
            <person name="Jedrychowski M.P."/>
            <person name="Elias J.E."/>
            <person name="Goswami T."/>
            <person name="Rad R."/>
            <person name="Beausoleil S.A."/>
            <person name="Villen J."/>
            <person name="Haas W."/>
            <person name="Sowa M.E."/>
            <person name="Gygi S.P."/>
        </authorList>
    </citation>
    <scope>PHOSPHORYLATION [LARGE SCALE ANALYSIS] AT SER-414</scope>
    <scope>IDENTIFICATION BY MASS SPECTROMETRY [LARGE SCALE ANALYSIS]</scope>
    <source>
        <tissue>Kidney</tissue>
    </source>
</reference>
<reference key="13">
    <citation type="journal article" date="2012" name="PLoS Genet.">
        <title>Vsx2 controls eye organogenesis and retinal progenitor identity via homeodomain and non-homeodomain residues required for high affinity DNA binding.</title>
        <authorList>
            <person name="Zou C."/>
            <person name="Levine E.M."/>
        </authorList>
    </citation>
    <scope>INTERACTION WITH VSX2</scope>
</reference>
<reference evidence="17 18 19" key="14">
    <citation type="journal article" date="2012" name="Genes Dev.">
        <title>Restricted leucine zipper dimerization and specificity of DNA recognition of the melanocyte master regulator MITF.</title>
        <authorList>
            <person name="Pogenberg V."/>
            <person name="Ogmundsdottir M.H."/>
            <person name="Bergsteinsdottir K."/>
            <person name="Schepsky A."/>
            <person name="Phung B."/>
            <person name="Deineko V."/>
            <person name="Milewski M."/>
            <person name="Steingrimsson E."/>
            <person name="Wilmanns M."/>
        </authorList>
    </citation>
    <scope>X-RAY CRYSTALLOGRAPHY (1.95 ANGSTROMS) OF 324-403</scope>
    <scope>FUNCTION</scope>
    <scope>SUBUNIT</scope>
    <scope>DOMAIN</scope>
    <scope>COILED COIL</scope>
    <scope>DNA-BINDING</scope>
    <scope>MUTAGENESIS OF 367-GLU--GLN-369</scope>
</reference>
<gene>
    <name type="primary">Mitf</name>
    <name type="synonym">Bw</name>
    <name type="synonym">Mi</name>
    <name type="synonym">Vit</name>
</gene>
<proteinExistence type="evidence at protein level"/>
<sequence length="526" mass="58605">MQSESGIVADFEVGEEFHEEPKTYYELKSQPLKSSSSAEHSGASKPPLSSSTMTSRILLRQQLMREQMQEQERREQQQKLQAAQFMQQRVAVSQTPAINVSVPTTLPSATQVPMEVLKVQTHLENPTKYHIQQAQRHQVKQYLSTTLANKHASQVLSSPCPNQPGDHAMPPVPGSSAPNSPMAMLTLNSNCEKEAFYKFEEQSRAESECPGMNTHSRASCMQMDDVIDDIISLESSYNEEILGLMDPALQMANTLPVSGNLIDLYSNQGLPPPGLTISNSCPANLPNIKRELTACIFPTESEARALAKERQKKDNHNLIERRRRFNINDRIKELGTLIPKSNDPDMRWNKGTILKASVDYIRKLQREQQRAKDLENRQKKLEHANRHLLLRVQELEMQARAHGLSLIPSTGLCSPDLVNRIIKQEPVLENCSQELVQHQADLTCTTTLDLTDGTITFTNNLGTMPESSPAYSIPRKMGSNLEDILMDDALSPVGVTDPLLSSVSPGASKTSSRRSSMSAEETEHAC</sequence>